<dbReference type="EC" id="1.97.1.12" evidence="1"/>
<dbReference type="EMBL" id="AP002983">
    <property type="protein sequence ID" value="BAB33187.1"/>
    <property type="molecule type" value="Genomic_DNA"/>
</dbReference>
<dbReference type="RefSeq" id="NP_084789.1">
    <property type="nucleotide sequence ID" value="NC_002694.1"/>
</dbReference>
<dbReference type="SMR" id="P58385"/>
<dbReference type="GeneID" id="802932"/>
<dbReference type="OMA" id="EQWVADP"/>
<dbReference type="GO" id="GO:0009535">
    <property type="term" value="C:chloroplast thylakoid membrane"/>
    <property type="evidence" value="ECO:0007669"/>
    <property type="project" value="UniProtKB-SubCell"/>
</dbReference>
<dbReference type="GO" id="GO:0009522">
    <property type="term" value="C:photosystem I"/>
    <property type="evidence" value="ECO:0007669"/>
    <property type="project" value="UniProtKB-KW"/>
</dbReference>
<dbReference type="GO" id="GO:0051539">
    <property type="term" value="F:4 iron, 4 sulfur cluster binding"/>
    <property type="evidence" value="ECO:0007669"/>
    <property type="project" value="UniProtKB-KW"/>
</dbReference>
<dbReference type="GO" id="GO:0016168">
    <property type="term" value="F:chlorophyll binding"/>
    <property type="evidence" value="ECO:0007669"/>
    <property type="project" value="UniProtKB-KW"/>
</dbReference>
<dbReference type="GO" id="GO:0009055">
    <property type="term" value="F:electron transfer activity"/>
    <property type="evidence" value="ECO:0007669"/>
    <property type="project" value="UniProtKB-UniRule"/>
</dbReference>
<dbReference type="GO" id="GO:0000287">
    <property type="term" value="F:magnesium ion binding"/>
    <property type="evidence" value="ECO:0007669"/>
    <property type="project" value="UniProtKB-UniRule"/>
</dbReference>
<dbReference type="GO" id="GO:0016491">
    <property type="term" value="F:oxidoreductase activity"/>
    <property type="evidence" value="ECO:0007669"/>
    <property type="project" value="UniProtKB-KW"/>
</dbReference>
<dbReference type="GO" id="GO:0015979">
    <property type="term" value="P:photosynthesis"/>
    <property type="evidence" value="ECO:0007669"/>
    <property type="project" value="UniProtKB-UniRule"/>
</dbReference>
<dbReference type="FunFam" id="1.20.1130.10:FF:000001">
    <property type="entry name" value="Photosystem I P700 chlorophyll a apoprotein A2"/>
    <property type="match status" value="1"/>
</dbReference>
<dbReference type="Gene3D" id="1.20.1130.10">
    <property type="entry name" value="Photosystem I PsaA/PsaB"/>
    <property type="match status" value="1"/>
</dbReference>
<dbReference type="HAMAP" id="MF_00482">
    <property type="entry name" value="PSI_PsaB"/>
    <property type="match status" value="1"/>
</dbReference>
<dbReference type="InterPro" id="IPR001280">
    <property type="entry name" value="PSI_PsaA/B"/>
</dbReference>
<dbReference type="InterPro" id="IPR020586">
    <property type="entry name" value="PSI_PsaA/B_CS"/>
</dbReference>
<dbReference type="InterPro" id="IPR036408">
    <property type="entry name" value="PSI_PsaA/B_sf"/>
</dbReference>
<dbReference type="InterPro" id="IPR006244">
    <property type="entry name" value="PSI_PsaB"/>
</dbReference>
<dbReference type="NCBIfam" id="TIGR01336">
    <property type="entry name" value="psaB"/>
    <property type="match status" value="1"/>
</dbReference>
<dbReference type="PANTHER" id="PTHR30128">
    <property type="entry name" value="OUTER MEMBRANE PROTEIN, OMPA-RELATED"/>
    <property type="match status" value="1"/>
</dbReference>
<dbReference type="PANTHER" id="PTHR30128:SF19">
    <property type="entry name" value="PHOTOSYSTEM I P700 CHLOROPHYLL A APOPROTEIN A1-RELATED"/>
    <property type="match status" value="1"/>
</dbReference>
<dbReference type="Pfam" id="PF00223">
    <property type="entry name" value="PsaA_PsaB"/>
    <property type="match status" value="1"/>
</dbReference>
<dbReference type="PIRSF" id="PIRSF002905">
    <property type="entry name" value="PSI_A"/>
    <property type="match status" value="1"/>
</dbReference>
<dbReference type="PRINTS" id="PR00257">
    <property type="entry name" value="PHOTSYSPSAAB"/>
</dbReference>
<dbReference type="SUPFAM" id="SSF81558">
    <property type="entry name" value="Photosystem I subunits PsaA/PsaB"/>
    <property type="match status" value="1"/>
</dbReference>
<dbReference type="PROSITE" id="PS00419">
    <property type="entry name" value="PHOTOSYSTEM_I_PSAAB"/>
    <property type="match status" value="1"/>
</dbReference>
<reference key="1">
    <citation type="journal article" date="2000" name="DNA Res.">
        <title>Complete structure of the chloroplast genome of a legume, Lotus japonicus.</title>
        <authorList>
            <person name="Kato T."/>
            <person name="Kaneko T."/>
            <person name="Sato S."/>
            <person name="Nakamura Y."/>
            <person name="Tabata S."/>
        </authorList>
    </citation>
    <scope>NUCLEOTIDE SEQUENCE [LARGE SCALE GENOMIC DNA]</scope>
    <source>
        <strain>cv. Miyakojima MG-20</strain>
    </source>
</reference>
<feature type="chain" id="PRO_0000088619" description="Photosystem I P700 chlorophyll a apoprotein A2">
    <location>
        <begin position="1"/>
        <end position="734"/>
    </location>
</feature>
<feature type="transmembrane region" description="Helical; Name=I" evidence="1">
    <location>
        <begin position="46"/>
        <end position="69"/>
    </location>
</feature>
<feature type="transmembrane region" description="Helical; Name=II" evidence="1">
    <location>
        <begin position="135"/>
        <end position="158"/>
    </location>
</feature>
<feature type="transmembrane region" description="Helical; Name=III" evidence="1">
    <location>
        <begin position="175"/>
        <end position="199"/>
    </location>
</feature>
<feature type="transmembrane region" description="Helical; Name=IV" evidence="1">
    <location>
        <begin position="273"/>
        <end position="291"/>
    </location>
</feature>
<feature type="transmembrane region" description="Helical; Name=V" evidence="1">
    <location>
        <begin position="330"/>
        <end position="353"/>
    </location>
</feature>
<feature type="transmembrane region" description="Helical; Name=VI" evidence="1">
    <location>
        <begin position="369"/>
        <end position="395"/>
    </location>
</feature>
<feature type="transmembrane region" description="Helical; Name=VII" evidence="1">
    <location>
        <begin position="417"/>
        <end position="439"/>
    </location>
</feature>
<feature type="transmembrane region" description="Helical; Name=VIII" evidence="1">
    <location>
        <begin position="517"/>
        <end position="535"/>
    </location>
</feature>
<feature type="transmembrane region" description="Helical; Name=IX" evidence="1">
    <location>
        <begin position="575"/>
        <end position="596"/>
    </location>
</feature>
<feature type="transmembrane region" description="Helical; Name=X" evidence="1">
    <location>
        <begin position="643"/>
        <end position="665"/>
    </location>
</feature>
<feature type="transmembrane region" description="Helical; Name=XI" evidence="1">
    <location>
        <begin position="707"/>
        <end position="727"/>
    </location>
</feature>
<feature type="binding site" evidence="1">
    <location>
        <position position="559"/>
    </location>
    <ligand>
        <name>[4Fe-4S] cluster</name>
        <dbReference type="ChEBI" id="CHEBI:49883"/>
        <note>ligand shared between dimeric partners</note>
    </ligand>
</feature>
<feature type="binding site" evidence="1">
    <location>
        <position position="568"/>
    </location>
    <ligand>
        <name>[4Fe-4S] cluster</name>
        <dbReference type="ChEBI" id="CHEBI:49883"/>
        <note>ligand shared between dimeric partners</note>
    </ligand>
</feature>
<feature type="binding site" description="axial binding residue" evidence="1">
    <location>
        <position position="654"/>
    </location>
    <ligand>
        <name>chlorophyll a</name>
        <dbReference type="ChEBI" id="CHEBI:58416"/>
        <label>B1</label>
    </ligand>
    <ligandPart>
        <name>Mg</name>
        <dbReference type="ChEBI" id="CHEBI:25107"/>
    </ligandPart>
</feature>
<feature type="binding site" description="axial binding residue" evidence="1">
    <location>
        <position position="662"/>
    </location>
    <ligand>
        <name>chlorophyll a</name>
        <dbReference type="ChEBI" id="CHEBI:58416"/>
        <label>B3</label>
    </ligand>
    <ligandPart>
        <name>Mg</name>
        <dbReference type="ChEBI" id="CHEBI:25107"/>
    </ligandPart>
</feature>
<feature type="binding site" evidence="1">
    <location>
        <position position="670"/>
    </location>
    <ligand>
        <name>chlorophyll a</name>
        <dbReference type="ChEBI" id="CHEBI:58416"/>
        <label>B3</label>
    </ligand>
</feature>
<feature type="binding site" evidence="1">
    <location>
        <position position="671"/>
    </location>
    <ligand>
        <name>phylloquinone</name>
        <dbReference type="ChEBI" id="CHEBI:18067"/>
        <label>B</label>
    </ligand>
</feature>
<organism>
    <name type="scientific">Lotus japonicus</name>
    <name type="common">Lotus corniculatus var. japonicus</name>
    <dbReference type="NCBI Taxonomy" id="34305"/>
    <lineage>
        <taxon>Eukaryota</taxon>
        <taxon>Viridiplantae</taxon>
        <taxon>Streptophyta</taxon>
        <taxon>Embryophyta</taxon>
        <taxon>Tracheophyta</taxon>
        <taxon>Spermatophyta</taxon>
        <taxon>Magnoliopsida</taxon>
        <taxon>eudicotyledons</taxon>
        <taxon>Gunneridae</taxon>
        <taxon>Pentapetalae</taxon>
        <taxon>rosids</taxon>
        <taxon>fabids</taxon>
        <taxon>Fabales</taxon>
        <taxon>Fabaceae</taxon>
        <taxon>Papilionoideae</taxon>
        <taxon>50 kb inversion clade</taxon>
        <taxon>NPAAA clade</taxon>
        <taxon>Hologalegina</taxon>
        <taxon>robinioid clade</taxon>
        <taxon>Loteae</taxon>
        <taxon>Lotus</taxon>
    </lineage>
</organism>
<protein>
    <recommendedName>
        <fullName evidence="1">Photosystem I P700 chlorophyll a apoprotein A2</fullName>
        <ecNumber evidence="1">1.97.1.12</ecNumber>
    </recommendedName>
    <alternativeName>
        <fullName evidence="1">PSI-B</fullName>
    </alternativeName>
    <alternativeName>
        <fullName evidence="1">PsaB</fullName>
    </alternativeName>
</protein>
<sequence length="734" mass="82362">MALRFPRFSQGLAQDPTTRRIWFGIATAHDFESHDDITEERLYQNIFASHFGQLAIIFLWTSGNLFHVAWQGNFEAWVQDPLHVRPIAHAIWDPHFGQPAVEAFTRGGALGPVNIAYSGVYQWWYTIGLRTNGDLYSGALFLLFLSAISLLAGWLHLQPKWKPSVSWFKNAESRLNHHLSGLFGVSSLAWTGHLVHVAIPGSRGEYVRWNNFLSILPHPQGLGPLFTGQWNLYAQNPDSSSHLFGTSQGAGTAILTLLGGFHPQTQSLWLTDMAHHHLAIAILFLLAGHMYRTNFGIGHSIKDLLEAHIPPGGRLGRGHKGLYDTINNSIHFQLGLALASLGVITSLVAQHMYSLPAYAFIAQDYTTQAALYTHHQYIAGFIMTGAFAHGAIFFIRDYNPEQNEDNVLARMLDHKEAIISHLSWASLFLGFHTLGLYVHNDVMLAFGTPEKQILIEPIFAQWIQSAHGKTSYGFDVLLSSTNSPAFNAGRSIWLPGWLNAINENSNSLFLTIGPGDFLVHHAIALGLHTTTLILVKGALDARGSKLMPDKKDFGYSFPCDGPGRGGTCDISAWDAFYLAVFWMLNTIGWVTFYWHWKHITLWQGNVSQFNESSTYLMGWLRDYLWLNSSQLINGYNPFGMNSLSVWAWMFLFGHLVWATGFMFLISWRGYWQELIETLAWAHERTPLANLIRWRDKPVALSIVQARLVGLAHFSVGYIFTYAAFLIASTSGKFG</sequence>
<name>PSAB_LOTJA</name>
<geneLocation type="chloroplast"/>
<gene>
    <name evidence="1" type="primary">psaB</name>
</gene>
<comment type="function">
    <text evidence="1">PsaA and PsaB bind P700, the primary electron donor of photosystem I (PSI), as well as the electron acceptors A0, A1 and FX. PSI is a plastocyanin-ferredoxin oxidoreductase, converting photonic excitation into a charge separation, which transfers an electron from the donor P700 chlorophyll pair to the spectroscopically characterized acceptors A0, A1, FX, FA and FB in turn. Oxidized P700 is reduced on the lumenal side of the thylakoid membrane by plastocyanin.</text>
</comment>
<comment type="catalytic activity">
    <reaction evidence="1">
        <text>reduced [plastocyanin] + hnu + oxidized [2Fe-2S]-[ferredoxin] = oxidized [plastocyanin] + reduced [2Fe-2S]-[ferredoxin]</text>
        <dbReference type="Rhea" id="RHEA:30407"/>
        <dbReference type="Rhea" id="RHEA-COMP:10000"/>
        <dbReference type="Rhea" id="RHEA-COMP:10001"/>
        <dbReference type="Rhea" id="RHEA-COMP:10039"/>
        <dbReference type="Rhea" id="RHEA-COMP:10040"/>
        <dbReference type="ChEBI" id="CHEBI:29036"/>
        <dbReference type="ChEBI" id="CHEBI:30212"/>
        <dbReference type="ChEBI" id="CHEBI:33737"/>
        <dbReference type="ChEBI" id="CHEBI:33738"/>
        <dbReference type="ChEBI" id="CHEBI:49552"/>
        <dbReference type="EC" id="1.97.1.12"/>
    </reaction>
</comment>
<comment type="cofactor">
    <text evidence="1">P700 is a chlorophyll a/chlorophyll a' dimer, A0 is one or more chlorophyll a, A1 is one or both phylloquinones and FX is a shared 4Fe-4S iron-sulfur center.</text>
</comment>
<comment type="subunit">
    <text evidence="1">The PsaA/B heterodimer binds the P700 chlorophyll special pair and subsequent electron acceptors. PSI consists of a core antenna complex that captures photons, and an electron transfer chain that converts photonic excitation into a charge separation. The eukaryotic PSI reaction center is composed of at least 11 subunits.</text>
</comment>
<comment type="subcellular location">
    <subcellularLocation>
        <location evidence="1">Plastid</location>
        <location evidence="1">Chloroplast thylakoid membrane</location>
        <topology evidence="1">Multi-pass membrane protein</topology>
    </subcellularLocation>
</comment>
<comment type="similarity">
    <text evidence="1">Belongs to the PsaA/PsaB family.</text>
</comment>
<evidence type="ECO:0000255" key="1">
    <source>
        <dbReference type="HAMAP-Rule" id="MF_00482"/>
    </source>
</evidence>
<accession>P58385</accession>
<proteinExistence type="inferred from homology"/>
<keyword id="KW-0004">4Fe-4S</keyword>
<keyword id="KW-0148">Chlorophyll</keyword>
<keyword id="KW-0150">Chloroplast</keyword>
<keyword id="KW-0157">Chromophore</keyword>
<keyword id="KW-0249">Electron transport</keyword>
<keyword id="KW-0408">Iron</keyword>
<keyword id="KW-0411">Iron-sulfur</keyword>
<keyword id="KW-0460">Magnesium</keyword>
<keyword id="KW-0472">Membrane</keyword>
<keyword id="KW-0479">Metal-binding</keyword>
<keyword id="KW-0560">Oxidoreductase</keyword>
<keyword id="KW-0602">Photosynthesis</keyword>
<keyword id="KW-0603">Photosystem I</keyword>
<keyword id="KW-0934">Plastid</keyword>
<keyword id="KW-0793">Thylakoid</keyword>
<keyword id="KW-0812">Transmembrane</keyword>
<keyword id="KW-1133">Transmembrane helix</keyword>
<keyword id="KW-0813">Transport</keyword>